<reference key="1">
    <citation type="journal article" date="2004" name="Genome Res.">
        <title>The status, quality, and expansion of the NIH full-length cDNA project: the Mammalian Gene Collection (MGC).</title>
        <authorList>
            <consortium name="The MGC Project Team"/>
        </authorList>
    </citation>
    <scope>NUCLEOTIDE SEQUENCE [LARGE SCALE MRNA]</scope>
    <source>
        <tissue>Prostate</tissue>
    </source>
</reference>
<reference key="2">
    <citation type="journal article" date="1995" name="Biochem. Biophys. Res. Commun.">
        <title>Molecular cloning of a new member of the Rab protein family, Rab 26, from rat pancreas.</title>
        <authorList>
            <person name="Wagner A.C.C."/>
            <person name="Strowski M.Z."/>
            <person name="Goeke B."/>
            <person name="Williams J.A."/>
        </authorList>
    </citation>
    <scope>NUCLEOTIDE SEQUENCE [MRNA] OF 63-257</scope>
    <scope>TISSUE SPECIFICITY</scope>
    <source>
        <strain>Sprague-Dawley</strain>
        <tissue>Pancreas</tissue>
    </source>
</reference>
<reference key="3">
    <citation type="journal article" date="2000" name="Histochem. Cell Biol.">
        <title>Expression, characterization, and localization of Rab26, a low molecular weight GTP-binding protein, in the rat parotid gland.</title>
        <authorList>
            <person name="Yoshie S."/>
            <person name="Imai A."/>
            <person name="Nashida T."/>
            <person name="Shimomura H."/>
        </authorList>
    </citation>
    <scope>FUNCTION</scope>
    <scope>SUBCELLULAR LOCATION</scope>
    <source>
        <tissue>Parotid gland</tissue>
    </source>
</reference>
<reference key="4">
    <citation type="journal article" date="2006" name="Arch. Oral Biol.">
        <title>Relation of Rab26 to the amylase release from rat parotid acinar cells.</title>
        <authorList>
            <person name="Nashida T."/>
            <person name="Imai A."/>
            <person name="Shimomura H."/>
        </authorList>
    </citation>
    <scope>FUNCTION</scope>
    <scope>SUBCELLULAR LOCATION</scope>
</reference>
<comment type="function">
    <text evidence="2 4 6 7">The small GTPases Rab are key regulators of intracellular membrane trafficking, from the formation of transport vesicles to their fusion with membranes. Rabs cycle between an inactive GDP-bound form and an active GTP-bound form that is able to recruit to membranes different set of downstream effectors directly responsible for vesicle formation, movement, tethering and fusion (By similarity). RAB26 mediates transport of ADRA2A and ADRA2B from the Golgi to the cell membrane. Plays a role in the maturation of zymogenic granules and in pepsinogen secretion in the stomach (By similarity). Plays a role in the secretion of amylase from acinar granules in the parotid gland (PubMed:10857477, PubMed:16076461).</text>
</comment>
<comment type="catalytic activity">
    <reaction evidence="2">
        <text>GTP + H2O = GDP + phosphate + H(+)</text>
        <dbReference type="Rhea" id="RHEA:19669"/>
        <dbReference type="ChEBI" id="CHEBI:15377"/>
        <dbReference type="ChEBI" id="CHEBI:15378"/>
        <dbReference type="ChEBI" id="CHEBI:37565"/>
        <dbReference type="ChEBI" id="CHEBI:43474"/>
        <dbReference type="ChEBI" id="CHEBI:58189"/>
        <dbReference type="EC" id="3.6.5.2"/>
    </reaction>
    <physiologicalReaction direction="left-to-right" evidence="2">
        <dbReference type="Rhea" id="RHEA:19670"/>
    </physiologicalReaction>
</comment>
<comment type="cofactor">
    <cofactor evidence="4">
        <name>Mg(2+)</name>
        <dbReference type="ChEBI" id="CHEBI:18420"/>
    </cofactor>
</comment>
<comment type="activity regulation">
    <text evidence="9">Regulated by guanine nucleotide exchange factors (GEFs) which promote the exchange of bound GDP for free GTP. Regulated by GTPase activating proteins (GAPs) which increase the GTP hydrolysis activity. Inhibited by GDP dissociation inhibitors (GDIs).</text>
</comment>
<comment type="subunit">
    <text evidence="1">Interacts with ADRA2B. Interacts with RIMS1 (By similarity).</text>
</comment>
<comment type="subcellular location">
    <subcellularLocation>
        <location evidence="6 7">Cytoplasmic vesicle</location>
        <location evidence="6 7">Secretory vesicle membrane</location>
        <topology evidence="9">Lipid-anchor</topology>
        <orientation evidence="9">Cytoplasmic side</orientation>
    </subcellularLocation>
    <subcellularLocation>
        <location evidence="4">Golgi apparatus membrane</location>
        <topology evidence="4">Lipid-anchor</topology>
        <orientation evidence="4">Cytoplasmic side</orientation>
    </subcellularLocation>
    <text evidence="1 6">Inhibition of S-geranylgeranyl cysteine formation abolishes membrane location (By similarity). Localized immediately around secretory granules in the acinar cells of the parotid gland (PubMed:10857477). Not localized in plasma membranes (PubMed:10857477).</text>
</comment>
<comment type="tissue specificity">
    <text evidence="8">Expressed in pancreas, kidney, brain, submandibular gland, and lung.</text>
</comment>
<comment type="domain">
    <text evidence="3">Switch 1, switch 2 and the interswitch regions are characteristic of Rab GTPases and mediate the interactions with Rab downstream effectors. The switch regions undergo conformational changes upon nucleotide binding which drive interaction with specific sets of effector proteins, with most effectors only binding to GTP-bound Rab.</text>
</comment>
<comment type="similarity">
    <text evidence="9">Belongs to the small GTPase superfamily. Rab family.</text>
</comment>
<comment type="sequence caution" evidence="9">
    <conflict type="erroneous initiation">
        <sequence resource="EMBL-CDS" id="AAA69955"/>
    </conflict>
</comment>
<evidence type="ECO:0000250" key="1"/>
<evidence type="ECO:0000250" key="2">
    <source>
        <dbReference type="UniProtKB" id="P61006"/>
    </source>
</evidence>
<evidence type="ECO:0000250" key="3">
    <source>
        <dbReference type="UniProtKB" id="P62820"/>
    </source>
</evidence>
<evidence type="ECO:0000250" key="4">
    <source>
        <dbReference type="UniProtKB" id="Q9ULW5"/>
    </source>
</evidence>
<evidence type="ECO:0000256" key="5">
    <source>
        <dbReference type="SAM" id="MobiDB-lite"/>
    </source>
</evidence>
<evidence type="ECO:0000269" key="6">
    <source>
    </source>
</evidence>
<evidence type="ECO:0000269" key="7">
    <source>
    </source>
</evidence>
<evidence type="ECO:0000269" key="8">
    <source>
    </source>
</evidence>
<evidence type="ECO:0000305" key="9"/>
<evidence type="ECO:0000312" key="10">
    <source>
        <dbReference type="RGD" id="620890"/>
    </source>
</evidence>
<protein>
    <recommendedName>
        <fullName>Ras-related protein Rab-26</fullName>
        <ecNumber evidence="2">3.6.5.2</ecNumber>
    </recommendedName>
</protein>
<keyword id="KW-0968">Cytoplasmic vesicle</keyword>
<keyword id="KW-0333">Golgi apparatus</keyword>
<keyword id="KW-0342">GTP-binding</keyword>
<keyword id="KW-0378">Hydrolase</keyword>
<keyword id="KW-0449">Lipoprotein</keyword>
<keyword id="KW-0460">Magnesium</keyword>
<keyword id="KW-0472">Membrane</keyword>
<keyword id="KW-0479">Metal-binding</keyword>
<keyword id="KW-0547">Nucleotide-binding</keyword>
<keyword id="KW-0636">Prenylation</keyword>
<keyword id="KW-0653">Protein transport</keyword>
<keyword id="KW-1185">Reference proteome</keyword>
<keyword id="KW-0813">Transport</keyword>
<organism>
    <name type="scientific">Rattus norvegicus</name>
    <name type="common">Rat</name>
    <dbReference type="NCBI Taxonomy" id="10116"/>
    <lineage>
        <taxon>Eukaryota</taxon>
        <taxon>Metazoa</taxon>
        <taxon>Chordata</taxon>
        <taxon>Craniata</taxon>
        <taxon>Vertebrata</taxon>
        <taxon>Euteleostomi</taxon>
        <taxon>Mammalia</taxon>
        <taxon>Eutheria</taxon>
        <taxon>Euarchontoglires</taxon>
        <taxon>Glires</taxon>
        <taxon>Rodentia</taxon>
        <taxon>Myomorpha</taxon>
        <taxon>Muroidea</taxon>
        <taxon>Muridae</taxon>
        <taxon>Murinae</taxon>
        <taxon>Rattus</taxon>
    </lineage>
</organism>
<gene>
    <name evidence="10" type="primary">Rab26</name>
</gene>
<dbReference type="EC" id="3.6.5.2" evidence="2"/>
<dbReference type="EMBL" id="BC061984">
    <property type="protein sequence ID" value="AAH61984.1"/>
    <property type="molecule type" value="mRNA"/>
</dbReference>
<dbReference type="EMBL" id="U18771">
    <property type="protein sequence ID" value="AAA69955.1"/>
    <property type="status" value="ALT_INIT"/>
    <property type="molecule type" value="mRNA"/>
</dbReference>
<dbReference type="PIR" id="JC2528">
    <property type="entry name" value="JC2528"/>
</dbReference>
<dbReference type="RefSeq" id="NP_598264.2">
    <property type="nucleotide sequence ID" value="NM_133580.2"/>
</dbReference>
<dbReference type="SMR" id="P51156"/>
<dbReference type="FunCoup" id="P51156">
    <property type="interactions" value="1021"/>
</dbReference>
<dbReference type="STRING" id="10116.ENSRNOP00000004249"/>
<dbReference type="iPTMnet" id="P51156"/>
<dbReference type="PhosphoSitePlus" id="P51156"/>
<dbReference type="jPOST" id="P51156"/>
<dbReference type="PaxDb" id="10116-ENSRNOP00000004249"/>
<dbReference type="GeneID" id="171111"/>
<dbReference type="KEGG" id="rno:171111"/>
<dbReference type="UCSC" id="RGD:620890">
    <property type="organism name" value="rat"/>
</dbReference>
<dbReference type="AGR" id="RGD:620890"/>
<dbReference type="CTD" id="25837"/>
<dbReference type="RGD" id="620890">
    <property type="gene designation" value="Rab26"/>
</dbReference>
<dbReference type="VEuPathDB" id="HostDB:ENSRNOG00000042086"/>
<dbReference type="eggNOG" id="KOG0083">
    <property type="taxonomic scope" value="Eukaryota"/>
</dbReference>
<dbReference type="HOGENOM" id="CLU_041217_10_1_1"/>
<dbReference type="InParanoid" id="P51156"/>
<dbReference type="PhylomeDB" id="P51156"/>
<dbReference type="Reactome" id="R-RNO-8873719">
    <property type="pathway name" value="RAB geranylgeranylation"/>
</dbReference>
<dbReference type="PRO" id="PR:P51156"/>
<dbReference type="Proteomes" id="UP000002494">
    <property type="component" value="Chromosome 10"/>
</dbReference>
<dbReference type="Bgee" id="ENSRNOG00000042086">
    <property type="expression patterns" value="Expressed in pancreas and 19 other cell types or tissues"/>
</dbReference>
<dbReference type="GO" id="GO:0005768">
    <property type="term" value="C:endosome"/>
    <property type="evidence" value="ECO:0000318"/>
    <property type="project" value="GO_Central"/>
</dbReference>
<dbReference type="GO" id="GO:0005794">
    <property type="term" value="C:Golgi apparatus"/>
    <property type="evidence" value="ECO:0000318"/>
    <property type="project" value="GO_Central"/>
</dbReference>
<dbReference type="GO" id="GO:0000139">
    <property type="term" value="C:Golgi membrane"/>
    <property type="evidence" value="ECO:0000250"/>
    <property type="project" value="UniProtKB"/>
</dbReference>
<dbReference type="GO" id="GO:0005886">
    <property type="term" value="C:plasma membrane"/>
    <property type="evidence" value="ECO:0000314"/>
    <property type="project" value="UniProtKB"/>
</dbReference>
<dbReference type="GO" id="GO:0030667">
    <property type="term" value="C:secretory granule membrane"/>
    <property type="evidence" value="ECO:0000250"/>
    <property type="project" value="UniProtKB"/>
</dbReference>
<dbReference type="GO" id="GO:0030672">
    <property type="term" value="C:synaptic vesicle membrane"/>
    <property type="evidence" value="ECO:0000266"/>
    <property type="project" value="RGD"/>
</dbReference>
<dbReference type="GO" id="GO:0019002">
    <property type="term" value="F:GMP binding"/>
    <property type="evidence" value="ECO:0000250"/>
    <property type="project" value="UniProtKB"/>
</dbReference>
<dbReference type="GO" id="GO:0005525">
    <property type="term" value="F:GTP binding"/>
    <property type="evidence" value="ECO:0000314"/>
    <property type="project" value="UniProtKB"/>
</dbReference>
<dbReference type="GO" id="GO:0003924">
    <property type="term" value="F:GTPase activity"/>
    <property type="evidence" value="ECO:0000318"/>
    <property type="project" value="GO_Central"/>
</dbReference>
<dbReference type="GO" id="GO:0035272">
    <property type="term" value="P:exocrine system development"/>
    <property type="evidence" value="ECO:0000314"/>
    <property type="project" value="UniProtKB"/>
</dbReference>
<dbReference type="GO" id="GO:0043001">
    <property type="term" value="P:Golgi to plasma membrane protein transport"/>
    <property type="evidence" value="ECO:0000250"/>
    <property type="project" value="UniProtKB"/>
</dbReference>
<dbReference type="GO" id="GO:0045055">
    <property type="term" value="P:regulated exocytosis"/>
    <property type="evidence" value="ECO:0000250"/>
    <property type="project" value="UniProtKB"/>
</dbReference>
<dbReference type="GO" id="GO:0017157">
    <property type="term" value="P:regulation of exocytosis"/>
    <property type="evidence" value="ECO:0000314"/>
    <property type="project" value="UniProtKB"/>
</dbReference>
<dbReference type="GO" id="GO:0140251">
    <property type="term" value="P:regulation protein catabolic process at presynapse"/>
    <property type="evidence" value="ECO:0000266"/>
    <property type="project" value="RGD"/>
</dbReference>
<dbReference type="GO" id="GO:0016192">
    <property type="term" value="P:vesicle-mediated transport"/>
    <property type="evidence" value="ECO:0000304"/>
    <property type="project" value="RGD"/>
</dbReference>
<dbReference type="CDD" id="cd04112">
    <property type="entry name" value="Rab26"/>
    <property type="match status" value="1"/>
</dbReference>
<dbReference type="FunFam" id="3.40.50.300:FF:000459">
    <property type="entry name" value="ras-related protein Rab-37 isoform X1"/>
    <property type="match status" value="1"/>
</dbReference>
<dbReference type="Gene3D" id="3.40.50.300">
    <property type="entry name" value="P-loop containing nucleotide triphosphate hydrolases"/>
    <property type="match status" value="1"/>
</dbReference>
<dbReference type="InterPro" id="IPR027417">
    <property type="entry name" value="P-loop_NTPase"/>
</dbReference>
<dbReference type="InterPro" id="IPR005225">
    <property type="entry name" value="Small_GTP-bd"/>
</dbReference>
<dbReference type="InterPro" id="IPR001806">
    <property type="entry name" value="Small_GTPase"/>
</dbReference>
<dbReference type="InterPro" id="IPR050305">
    <property type="entry name" value="Small_GTPase_Rab"/>
</dbReference>
<dbReference type="NCBIfam" id="TIGR00231">
    <property type="entry name" value="small_GTP"/>
    <property type="match status" value="1"/>
</dbReference>
<dbReference type="PANTHER" id="PTHR47980">
    <property type="entry name" value="LD44762P"/>
    <property type="match status" value="1"/>
</dbReference>
<dbReference type="Pfam" id="PF00071">
    <property type="entry name" value="Ras"/>
    <property type="match status" value="1"/>
</dbReference>
<dbReference type="PRINTS" id="PR00449">
    <property type="entry name" value="RASTRNSFRMNG"/>
</dbReference>
<dbReference type="SMART" id="SM00177">
    <property type="entry name" value="ARF"/>
    <property type="match status" value="1"/>
</dbReference>
<dbReference type="SMART" id="SM00175">
    <property type="entry name" value="RAB"/>
    <property type="match status" value="1"/>
</dbReference>
<dbReference type="SMART" id="SM00176">
    <property type="entry name" value="RAN"/>
    <property type="match status" value="1"/>
</dbReference>
<dbReference type="SMART" id="SM00173">
    <property type="entry name" value="RAS"/>
    <property type="match status" value="1"/>
</dbReference>
<dbReference type="SMART" id="SM00174">
    <property type="entry name" value="RHO"/>
    <property type="match status" value="1"/>
</dbReference>
<dbReference type="SUPFAM" id="SSF52540">
    <property type="entry name" value="P-loop containing nucleoside triphosphate hydrolases"/>
    <property type="match status" value="1"/>
</dbReference>
<dbReference type="PROSITE" id="PS51419">
    <property type="entry name" value="RAB"/>
    <property type="match status" value="1"/>
</dbReference>
<name>RAB26_RAT</name>
<accession>P51156</accession>
<accession>Q6P6W7</accession>
<sequence>MSRKKTPKSKGGSVPAASTLPAAANGPRLAHPRTARPGPEAPPNGPPQSGRPSLGGTGDFYDVAFKVMLVGDSGVGKTCLLVRFKDGAFLAGTFISTVGIDFRNKVLDVDGMKVKLQIWDTAGQERFRSVTHAYYRDAHALLLLYDITNKDSFDNIQAWLTEIQEYAQQDVVLMLLGNKVDSTQERVVKREDGEKLAKEYGLPFMETSAKSGLNVDLAFTAIAKELKQRSTKAPSEPRFRLHDYVKREGRGVSCCRL</sequence>
<feature type="chain" id="PRO_0000121220" description="Ras-related protein Rab-26">
    <location>
        <begin position="1"/>
        <end position="257"/>
    </location>
</feature>
<feature type="region of interest" description="Disordered" evidence="5">
    <location>
        <begin position="1"/>
        <end position="53"/>
    </location>
</feature>
<feature type="short sequence motif" description="Switch 1" evidence="3">
    <location>
        <begin position="87"/>
        <end position="102"/>
    </location>
</feature>
<feature type="short sequence motif" description="Switch 2" evidence="3">
    <location>
        <begin position="120"/>
        <end position="137"/>
    </location>
</feature>
<feature type="binding site" evidence="4">
    <location>
        <position position="73"/>
    </location>
    <ligand>
        <name>GTP</name>
        <dbReference type="ChEBI" id="CHEBI:37565"/>
    </ligand>
</feature>
<feature type="binding site" evidence="2">
    <location>
        <position position="74"/>
    </location>
    <ligand>
        <name>GTP</name>
        <dbReference type="ChEBI" id="CHEBI:37565"/>
    </ligand>
</feature>
<feature type="binding site" evidence="2">
    <location>
        <position position="75"/>
    </location>
    <ligand>
        <name>GTP</name>
        <dbReference type="ChEBI" id="CHEBI:37565"/>
    </ligand>
</feature>
<feature type="binding site" evidence="4">
    <location>
        <position position="76"/>
    </location>
    <ligand>
        <name>GTP</name>
        <dbReference type="ChEBI" id="CHEBI:37565"/>
    </ligand>
</feature>
<feature type="binding site" evidence="4">
    <location>
        <position position="77"/>
    </location>
    <ligand>
        <name>GTP</name>
        <dbReference type="ChEBI" id="CHEBI:37565"/>
    </ligand>
</feature>
<feature type="binding site" evidence="4">
    <location>
        <position position="78"/>
    </location>
    <ligand>
        <name>GTP</name>
        <dbReference type="ChEBI" id="CHEBI:37565"/>
    </ligand>
</feature>
<feature type="binding site" evidence="4">
    <location>
        <position position="78"/>
    </location>
    <ligand>
        <name>Mg(2+)</name>
        <dbReference type="ChEBI" id="CHEBI:18420"/>
    </ligand>
</feature>
<feature type="binding site" evidence="4">
    <location>
        <position position="79"/>
    </location>
    <ligand>
        <name>GTP</name>
        <dbReference type="ChEBI" id="CHEBI:37565"/>
    </ligand>
</feature>
<feature type="binding site" evidence="2">
    <location>
        <position position="96"/>
    </location>
    <ligand>
        <name>GTP</name>
        <dbReference type="ChEBI" id="CHEBI:37565"/>
    </ligand>
</feature>
<feature type="binding site" evidence="4">
    <location>
        <position position="97"/>
    </location>
    <ligand>
        <name>GTP</name>
        <dbReference type="ChEBI" id="CHEBI:37565"/>
    </ligand>
</feature>
<feature type="binding site" evidence="4">
    <location>
        <position position="97"/>
    </location>
    <ligand>
        <name>Mg(2+)</name>
        <dbReference type="ChEBI" id="CHEBI:18420"/>
    </ligand>
</feature>
<feature type="binding site" evidence="2">
    <location>
        <position position="120"/>
    </location>
    <ligand>
        <name>Mg(2+)</name>
        <dbReference type="ChEBI" id="CHEBI:18420"/>
    </ligand>
</feature>
<feature type="binding site" evidence="4">
    <location>
        <position position="123"/>
    </location>
    <ligand>
        <name>GTP</name>
        <dbReference type="ChEBI" id="CHEBI:37565"/>
    </ligand>
</feature>
<feature type="binding site" evidence="4">
    <location>
        <position position="178"/>
    </location>
    <ligand>
        <name>GTP</name>
        <dbReference type="ChEBI" id="CHEBI:37565"/>
    </ligand>
</feature>
<feature type="binding site" evidence="4">
    <location>
        <position position="179"/>
    </location>
    <ligand>
        <name>GTP</name>
        <dbReference type="ChEBI" id="CHEBI:37565"/>
    </ligand>
</feature>
<feature type="binding site" evidence="4">
    <location>
        <position position="181"/>
    </location>
    <ligand>
        <name>GTP</name>
        <dbReference type="ChEBI" id="CHEBI:37565"/>
    </ligand>
</feature>
<feature type="binding site" evidence="4">
    <location>
        <position position="209"/>
    </location>
    <ligand>
        <name>GTP</name>
        <dbReference type="ChEBI" id="CHEBI:37565"/>
    </ligand>
</feature>
<feature type="binding site" evidence="4">
    <location>
        <position position="210"/>
    </location>
    <ligand>
        <name>GTP</name>
        <dbReference type="ChEBI" id="CHEBI:37565"/>
    </ligand>
</feature>
<feature type="lipid moiety-binding region" description="S-geranylgeranyl cysteine" evidence="1">
    <location>
        <position position="254"/>
    </location>
</feature>
<feature type="lipid moiety-binding region" description="S-geranylgeranyl cysteine" evidence="1">
    <location>
        <position position="255"/>
    </location>
</feature>
<proteinExistence type="evidence at transcript level"/>